<evidence type="ECO:0000255" key="1">
    <source>
        <dbReference type="HAMAP-Rule" id="MF_00116"/>
    </source>
</evidence>
<evidence type="ECO:0000269" key="2">
    <source>
    </source>
</evidence>
<evidence type="ECO:0000303" key="3">
    <source>
    </source>
</evidence>
<evidence type="ECO:0000305" key="4"/>
<evidence type="ECO:0000305" key="5">
    <source>
    </source>
</evidence>
<evidence type="ECO:0007744" key="6">
    <source>
        <dbReference type="PDB" id="1MQ7"/>
    </source>
</evidence>
<evidence type="ECO:0007744" key="7">
    <source>
        <dbReference type="PDB" id="1SIX"/>
    </source>
</evidence>
<evidence type="ECO:0007744" key="8">
    <source>
        <dbReference type="PDB" id="1SJN"/>
    </source>
</evidence>
<evidence type="ECO:0007744" key="9">
    <source>
        <dbReference type="PDB" id="1SLH"/>
    </source>
</evidence>
<evidence type="ECO:0007744" key="10">
    <source>
        <dbReference type="PDB" id="1SM8"/>
    </source>
</evidence>
<evidence type="ECO:0007744" key="11">
    <source>
        <dbReference type="PDB" id="1SMC"/>
    </source>
</evidence>
<evidence type="ECO:0007744" key="12">
    <source>
        <dbReference type="PDB" id="1SNF"/>
    </source>
</evidence>
<evidence type="ECO:0007829" key="13">
    <source>
        <dbReference type="PDB" id="1SIX"/>
    </source>
</evidence>
<evidence type="ECO:0007829" key="14">
    <source>
        <dbReference type="PDB" id="1SJN"/>
    </source>
</evidence>
<evidence type="ECO:0007829" key="15">
    <source>
        <dbReference type="PDB" id="3HZA"/>
    </source>
</evidence>
<evidence type="ECO:0007829" key="16">
    <source>
        <dbReference type="PDB" id="8P8O"/>
    </source>
</evidence>
<protein>
    <recommendedName>
        <fullName evidence="1">Deoxyuridine 5'-triphosphate nucleotidohydrolase</fullName>
        <shortName evidence="1 3">dUTPase</shortName>
        <ecNumber evidence="1 5">3.6.1.23</ecNumber>
    </recommendedName>
    <alternativeName>
        <fullName evidence="1">dUTP pyrophosphatase</fullName>
    </alternativeName>
</protein>
<name>DUT_MYCTU</name>
<feature type="chain" id="PRO_0000182884" description="Deoxyuridine 5'-triphosphate nucleotidohydrolase">
    <location>
        <begin position="1"/>
        <end position="154"/>
    </location>
</feature>
<feature type="binding site" evidence="1 2">
    <location>
        <begin position="64"/>
        <end position="66"/>
    </location>
    <ligand>
        <name>substrate</name>
    </ligand>
</feature>
<feature type="binding site" evidence="1 2">
    <location>
        <position position="77"/>
    </location>
    <ligand>
        <name>substrate</name>
    </ligand>
</feature>
<feature type="binding site" evidence="1 2">
    <location>
        <begin position="81"/>
        <end position="83"/>
    </location>
    <ligand>
        <name>substrate</name>
    </ligand>
</feature>
<feature type="binding site" evidence="2">
    <location>
        <position position="91"/>
    </location>
    <ligand>
        <name>substrate</name>
    </ligand>
</feature>
<feature type="strand" evidence="15">
    <location>
        <begin position="6"/>
        <end position="11"/>
    </location>
</feature>
<feature type="strand" evidence="16">
    <location>
        <begin position="12"/>
        <end position="14"/>
    </location>
</feature>
<feature type="strand" evidence="15">
    <location>
        <begin position="27"/>
        <end position="30"/>
    </location>
</feature>
<feature type="strand" evidence="15">
    <location>
        <begin position="35"/>
        <end position="37"/>
    </location>
</feature>
<feature type="strand" evidence="15">
    <location>
        <begin position="42"/>
        <end position="46"/>
    </location>
</feature>
<feature type="strand" evidence="15">
    <location>
        <begin position="48"/>
        <end position="52"/>
    </location>
</feature>
<feature type="strand" evidence="15">
    <location>
        <begin position="57"/>
        <end position="62"/>
    </location>
</feature>
<feature type="helix" evidence="15">
    <location>
        <begin position="65"/>
        <end position="71"/>
    </location>
</feature>
<feature type="strand" evidence="15">
    <location>
        <begin position="73"/>
        <end position="75"/>
    </location>
</feature>
<feature type="strand" evidence="15">
    <location>
        <begin position="78"/>
        <end position="82"/>
    </location>
</feature>
<feature type="strand" evidence="15">
    <location>
        <begin position="91"/>
        <end position="96"/>
    </location>
</feature>
<feature type="strand" evidence="16">
    <location>
        <begin position="98"/>
        <end position="100"/>
    </location>
</feature>
<feature type="strand" evidence="15">
    <location>
        <begin position="103"/>
        <end position="105"/>
    </location>
</feature>
<feature type="strand" evidence="15">
    <location>
        <begin position="110"/>
        <end position="118"/>
    </location>
</feature>
<feature type="strand" evidence="14">
    <location>
        <begin position="123"/>
        <end position="126"/>
    </location>
</feature>
<feature type="turn" evidence="15">
    <location>
        <begin position="130"/>
        <end position="134"/>
    </location>
</feature>
<feature type="strand" evidence="13">
    <location>
        <begin position="139"/>
        <end position="142"/>
    </location>
</feature>
<feature type="turn" evidence="15">
    <location>
        <begin position="145"/>
        <end position="148"/>
    </location>
</feature>
<organism>
    <name type="scientific">Mycobacterium tuberculosis (strain ATCC 25618 / H37Rv)</name>
    <dbReference type="NCBI Taxonomy" id="83332"/>
    <lineage>
        <taxon>Bacteria</taxon>
        <taxon>Bacillati</taxon>
        <taxon>Actinomycetota</taxon>
        <taxon>Actinomycetes</taxon>
        <taxon>Mycobacteriales</taxon>
        <taxon>Mycobacteriaceae</taxon>
        <taxon>Mycobacterium</taxon>
        <taxon>Mycobacterium tuberculosis complex</taxon>
    </lineage>
</organism>
<proteinExistence type="evidence at protein level"/>
<gene>
    <name type="primary">dut</name>
    <name type="ordered locus">Rv2697c</name>
    <name type="ORF">MTCY05A6.18c</name>
</gene>
<keyword id="KW-0002">3D-structure</keyword>
<keyword id="KW-0378">Hydrolase</keyword>
<keyword id="KW-0460">Magnesium</keyword>
<keyword id="KW-0479">Metal-binding</keyword>
<keyword id="KW-0546">Nucleotide metabolism</keyword>
<keyword id="KW-1185">Reference proteome</keyword>
<dbReference type="EC" id="3.6.1.23" evidence="1 5"/>
<dbReference type="EMBL" id="AL123456">
    <property type="protein sequence ID" value="CCP45495.1"/>
    <property type="molecule type" value="Genomic_DNA"/>
</dbReference>
<dbReference type="PIR" id="D70530">
    <property type="entry name" value="D70530"/>
</dbReference>
<dbReference type="RefSeq" id="NP_217213.1">
    <property type="nucleotide sequence ID" value="NC_000962.3"/>
</dbReference>
<dbReference type="RefSeq" id="WP_003413930.1">
    <property type="nucleotide sequence ID" value="NZ_NVQJ01000017.1"/>
</dbReference>
<dbReference type="PDB" id="1MQ7">
    <property type="method" value="X-ray"/>
    <property type="resolution" value="1.95 A"/>
    <property type="chains" value="A=1-154"/>
</dbReference>
<dbReference type="PDB" id="1SIX">
    <property type="method" value="X-ray"/>
    <property type="resolution" value="1.30 A"/>
    <property type="chains" value="A=1-154"/>
</dbReference>
<dbReference type="PDB" id="1SJN">
    <property type="method" value="X-ray"/>
    <property type="resolution" value="1.80 A"/>
    <property type="chains" value="A/B/C=1-154"/>
</dbReference>
<dbReference type="PDB" id="1SLH">
    <property type="method" value="X-ray"/>
    <property type="resolution" value="3.00 A"/>
    <property type="chains" value="A/B/C=1-154"/>
</dbReference>
<dbReference type="PDB" id="1SM8">
    <property type="method" value="X-ray"/>
    <property type="resolution" value="2.90 A"/>
    <property type="chains" value="A/B/C=1-154"/>
</dbReference>
<dbReference type="PDB" id="1SMC">
    <property type="method" value="X-ray"/>
    <property type="resolution" value="2.10 A"/>
    <property type="chains" value="A/B/C=1-154"/>
</dbReference>
<dbReference type="PDB" id="1SNF">
    <property type="method" value="X-ray"/>
    <property type="resolution" value="1.85 A"/>
    <property type="chains" value="A/B/C=1-154"/>
</dbReference>
<dbReference type="PDB" id="2PY4">
    <property type="method" value="X-ray"/>
    <property type="resolution" value="1.49 A"/>
    <property type="chains" value="A=1-154"/>
</dbReference>
<dbReference type="PDB" id="3H6D">
    <property type="method" value="X-ray"/>
    <property type="resolution" value="1.80 A"/>
    <property type="chains" value="A=1-154"/>
</dbReference>
<dbReference type="PDB" id="3HZA">
    <property type="method" value="X-ray"/>
    <property type="resolution" value="1.20 A"/>
    <property type="chains" value="A=1-154"/>
</dbReference>
<dbReference type="PDB" id="3I93">
    <property type="method" value="X-ray"/>
    <property type="resolution" value="1.80 A"/>
    <property type="chains" value="A=1-138"/>
</dbReference>
<dbReference type="PDB" id="3LOJ">
    <property type="method" value="X-ray"/>
    <property type="resolution" value="1.25 A"/>
    <property type="chains" value="A=1-154"/>
</dbReference>
<dbReference type="PDB" id="4GCY">
    <property type="method" value="X-ray"/>
    <property type="resolution" value="1.50 A"/>
    <property type="chains" value="A=1-154"/>
</dbReference>
<dbReference type="PDB" id="5ECT">
    <property type="method" value="X-ray"/>
    <property type="resolution" value="1.30 A"/>
    <property type="chains" value="A=1-142"/>
</dbReference>
<dbReference type="PDB" id="5EDD">
    <property type="method" value="X-ray"/>
    <property type="resolution" value="1.97 A"/>
    <property type="chains" value="A=1-154"/>
</dbReference>
<dbReference type="PDB" id="7PWX">
    <property type="method" value="X-ray"/>
    <property type="resolution" value="2.75 A"/>
    <property type="chains" value="HHH/III/JJJ/KKK/LLL/MMM=1-136"/>
</dbReference>
<dbReference type="PDB" id="8CGA">
    <property type="method" value="X-ray"/>
    <property type="resolution" value="1.30 A"/>
    <property type="chains" value="A=1-154"/>
</dbReference>
<dbReference type="PDB" id="8P8O">
    <property type="method" value="X-ray"/>
    <property type="resolution" value="3.40 A"/>
    <property type="chains" value="A/B/C/D/E/G=1-154"/>
</dbReference>
<dbReference type="PDBsum" id="1MQ7"/>
<dbReference type="PDBsum" id="1SIX"/>
<dbReference type="PDBsum" id="1SJN"/>
<dbReference type="PDBsum" id="1SLH"/>
<dbReference type="PDBsum" id="1SM8"/>
<dbReference type="PDBsum" id="1SMC"/>
<dbReference type="PDBsum" id="1SNF"/>
<dbReference type="PDBsum" id="2PY4"/>
<dbReference type="PDBsum" id="3H6D"/>
<dbReference type="PDBsum" id="3HZA"/>
<dbReference type="PDBsum" id="3I93"/>
<dbReference type="PDBsum" id="3LOJ"/>
<dbReference type="PDBsum" id="4GCY"/>
<dbReference type="PDBsum" id="5ECT"/>
<dbReference type="PDBsum" id="5EDD"/>
<dbReference type="PDBsum" id="7PWX"/>
<dbReference type="PDBsum" id="8CGA"/>
<dbReference type="PDBsum" id="8P8O"/>
<dbReference type="SMR" id="P9WNS5"/>
<dbReference type="FunCoup" id="P9WNS5">
    <property type="interactions" value="405"/>
</dbReference>
<dbReference type="STRING" id="83332.Rv2697c"/>
<dbReference type="DrugBank" id="DB01965">
    <property type="generic name" value="2'-Deoxyuridine 5'-alpha,beta-imido-triphosphate"/>
</dbReference>
<dbReference type="DrugBank" id="DB03800">
    <property type="generic name" value="Deoxyuridine monophosphate"/>
</dbReference>
<dbReference type="DrugBank" id="DB03413">
    <property type="generic name" value="Deoxyuridine-5'-Diphosphate"/>
</dbReference>
<dbReference type="DrugBank" id="DB02333">
    <property type="generic name" value="Deoxyuridine-5'-Triphosphate"/>
</dbReference>
<dbReference type="PaxDb" id="83332-Rv2697c"/>
<dbReference type="GeneID" id="45426685"/>
<dbReference type="GeneID" id="887290"/>
<dbReference type="KEGG" id="mtu:Rv2697c"/>
<dbReference type="KEGG" id="mtv:RVBD_2697c"/>
<dbReference type="TubercuList" id="Rv2697c"/>
<dbReference type="eggNOG" id="COG0756">
    <property type="taxonomic scope" value="Bacteria"/>
</dbReference>
<dbReference type="InParanoid" id="P9WNS5"/>
<dbReference type="OrthoDB" id="9809956at2"/>
<dbReference type="PhylomeDB" id="P9WNS5"/>
<dbReference type="BRENDA" id="3.6.1.23">
    <property type="organism ID" value="3445"/>
</dbReference>
<dbReference type="UniPathway" id="UPA00610">
    <property type="reaction ID" value="UER00666"/>
</dbReference>
<dbReference type="EvolutionaryTrace" id="P9WNS5"/>
<dbReference type="Proteomes" id="UP000001584">
    <property type="component" value="Chromosome"/>
</dbReference>
<dbReference type="GO" id="GO:0004170">
    <property type="term" value="F:dUTP diphosphatase activity"/>
    <property type="evidence" value="ECO:0000314"/>
    <property type="project" value="MTBBASE"/>
</dbReference>
<dbReference type="GO" id="GO:0000287">
    <property type="term" value="F:magnesium ion binding"/>
    <property type="evidence" value="ECO:0000314"/>
    <property type="project" value="MTBBASE"/>
</dbReference>
<dbReference type="GO" id="GO:0006226">
    <property type="term" value="P:dUMP biosynthetic process"/>
    <property type="evidence" value="ECO:0000318"/>
    <property type="project" value="GO_Central"/>
</dbReference>
<dbReference type="GO" id="GO:0046081">
    <property type="term" value="P:dUTP catabolic process"/>
    <property type="evidence" value="ECO:0000318"/>
    <property type="project" value="GO_Central"/>
</dbReference>
<dbReference type="GO" id="GO:0046080">
    <property type="term" value="P:dUTP metabolic process"/>
    <property type="evidence" value="ECO:0000314"/>
    <property type="project" value="MTBBASE"/>
</dbReference>
<dbReference type="CDD" id="cd07557">
    <property type="entry name" value="trimeric_dUTPase"/>
    <property type="match status" value="1"/>
</dbReference>
<dbReference type="FunFam" id="2.70.40.10:FF:000008">
    <property type="entry name" value="Deoxyuridine 5'-triphosphate nucleotidohydrolase"/>
    <property type="match status" value="1"/>
</dbReference>
<dbReference type="Gene3D" id="2.70.40.10">
    <property type="match status" value="1"/>
</dbReference>
<dbReference type="HAMAP" id="MF_00116">
    <property type="entry name" value="dUTPase_bact"/>
    <property type="match status" value="1"/>
</dbReference>
<dbReference type="InterPro" id="IPR008181">
    <property type="entry name" value="dUTPase"/>
</dbReference>
<dbReference type="InterPro" id="IPR029054">
    <property type="entry name" value="dUTPase-like"/>
</dbReference>
<dbReference type="InterPro" id="IPR036157">
    <property type="entry name" value="dUTPase-like_sf"/>
</dbReference>
<dbReference type="InterPro" id="IPR033704">
    <property type="entry name" value="dUTPase_trimeric"/>
</dbReference>
<dbReference type="NCBIfam" id="TIGR00576">
    <property type="entry name" value="dut"/>
    <property type="match status" value="1"/>
</dbReference>
<dbReference type="NCBIfam" id="NF001862">
    <property type="entry name" value="PRK00601.1"/>
    <property type="match status" value="1"/>
</dbReference>
<dbReference type="PANTHER" id="PTHR11241">
    <property type="entry name" value="DEOXYURIDINE 5'-TRIPHOSPHATE NUCLEOTIDOHYDROLASE"/>
    <property type="match status" value="1"/>
</dbReference>
<dbReference type="PANTHER" id="PTHR11241:SF0">
    <property type="entry name" value="DEOXYURIDINE 5'-TRIPHOSPHATE NUCLEOTIDOHYDROLASE"/>
    <property type="match status" value="1"/>
</dbReference>
<dbReference type="Pfam" id="PF00692">
    <property type="entry name" value="dUTPase"/>
    <property type="match status" value="1"/>
</dbReference>
<dbReference type="SUPFAM" id="SSF51283">
    <property type="entry name" value="dUTPase-like"/>
    <property type="match status" value="1"/>
</dbReference>
<accession>P9WNS5</accession>
<accession>L0TAD4</accession>
<accession>O07199</accession>
<accession>P0A552</accession>
<sequence length="154" mass="15803">MSTTLAIVRLDPGLPLPSRAHDGDAGVDLYSAEDVELAPGRRALVRTGVAVAVPFGMVGLVHPRSGLATRVGLSIVNSPGTIDAGYRGEIKVALINLDPAAPIVVHRGDRIAQLLVQRVELVELVEVSSFDEAGLASTSRGDGGHGSSGGHASL</sequence>
<comment type="function">
    <text evidence="1">This enzyme is involved in nucleotide metabolism: it produces dUMP, the immediate precursor of thymidine nucleotides and it decreases the intracellular concentration of dUTP so that uracil cannot be incorporated into DNA.</text>
</comment>
<comment type="catalytic activity">
    <reaction evidence="1 5">
        <text>dUTP + H2O = dUMP + diphosphate + H(+)</text>
        <dbReference type="Rhea" id="RHEA:10248"/>
        <dbReference type="ChEBI" id="CHEBI:15377"/>
        <dbReference type="ChEBI" id="CHEBI:15378"/>
        <dbReference type="ChEBI" id="CHEBI:33019"/>
        <dbReference type="ChEBI" id="CHEBI:61555"/>
        <dbReference type="ChEBI" id="CHEBI:246422"/>
        <dbReference type="EC" id="3.6.1.23"/>
    </reaction>
</comment>
<comment type="cofactor">
    <cofactor evidence="1 2">
        <name>Mg(2+)</name>
        <dbReference type="ChEBI" id="CHEBI:18420"/>
    </cofactor>
</comment>
<comment type="pathway">
    <text evidence="1">Pyrimidine metabolism; dUMP biosynthesis; dUMP from dCTP (dUTP route): step 2/2.</text>
</comment>
<comment type="subunit">
    <text evidence="1 2">Homotrimer.</text>
</comment>
<comment type="miscellaneous">
    <text evidence="2">Each trimer binds three substrate molecules. The ligands are bound between subunits, and for each substrate molecule, residues from adjacent subunits contribute to the binding interactions.</text>
</comment>
<comment type="similarity">
    <text evidence="1 4">Belongs to the dUTPase family.</text>
</comment>
<reference key="1">
    <citation type="journal article" date="1998" name="Nature">
        <title>Deciphering the biology of Mycobacterium tuberculosis from the complete genome sequence.</title>
        <authorList>
            <person name="Cole S.T."/>
            <person name="Brosch R."/>
            <person name="Parkhill J."/>
            <person name="Garnier T."/>
            <person name="Churcher C.M."/>
            <person name="Harris D.E."/>
            <person name="Gordon S.V."/>
            <person name="Eiglmeier K."/>
            <person name="Gas S."/>
            <person name="Barry C.E. III"/>
            <person name="Tekaia F."/>
            <person name="Badcock K."/>
            <person name="Basham D."/>
            <person name="Brown D."/>
            <person name="Chillingworth T."/>
            <person name="Connor R."/>
            <person name="Davies R.M."/>
            <person name="Devlin K."/>
            <person name="Feltwell T."/>
            <person name="Gentles S."/>
            <person name="Hamlin N."/>
            <person name="Holroyd S."/>
            <person name="Hornsby T."/>
            <person name="Jagels K."/>
            <person name="Krogh A."/>
            <person name="McLean J."/>
            <person name="Moule S."/>
            <person name="Murphy L.D."/>
            <person name="Oliver S."/>
            <person name="Osborne J."/>
            <person name="Quail M.A."/>
            <person name="Rajandream M.A."/>
            <person name="Rogers J."/>
            <person name="Rutter S."/>
            <person name="Seeger K."/>
            <person name="Skelton S."/>
            <person name="Squares S."/>
            <person name="Squares R."/>
            <person name="Sulston J.E."/>
            <person name="Taylor K."/>
            <person name="Whitehead S."/>
            <person name="Barrell B.G."/>
        </authorList>
    </citation>
    <scope>NUCLEOTIDE SEQUENCE [LARGE SCALE GENOMIC DNA]</scope>
    <source>
        <strain>ATCC 25618 / H37Rv</strain>
    </source>
</reference>
<reference key="2">
    <citation type="journal article" date="2011" name="Mol. Cell. Proteomics">
        <title>Proteogenomic analysis of Mycobacterium tuberculosis by high resolution mass spectrometry.</title>
        <authorList>
            <person name="Kelkar D.S."/>
            <person name="Kumar D."/>
            <person name="Kumar P."/>
            <person name="Balakrishnan L."/>
            <person name="Muthusamy B."/>
            <person name="Yadav A.K."/>
            <person name="Shrivastava P."/>
            <person name="Marimuthu A."/>
            <person name="Anand S."/>
            <person name="Sundaram H."/>
            <person name="Kingsbury R."/>
            <person name="Harsha H.C."/>
            <person name="Nair B."/>
            <person name="Prasad T.S."/>
            <person name="Chauhan D.S."/>
            <person name="Katoch K."/>
            <person name="Katoch V.M."/>
            <person name="Kumar P."/>
            <person name="Chaerkady R."/>
            <person name="Ramachandran S."/>
            <person name="Dash D."/>
            <person name="Pandey A."/>
        </authorList>
    </citation>
    <scope>IDENTIFICATION BY MASS SPECTROMETRY [LARGE SCALE ANALYSIS]</scope>
    <source>
        <strain>ATCC 25618 / H37Rv</strain>
    </source>
</reference>
<reference key="3">
    <citation type="submission" date="2002-09" db="PDB data bank">
        <title>Crystal structure of dUTPase from Mycobacterium tuberculosis.</title>
        <authorList>
            <person name="Sawaya M.R."/>
            <person name="Chan S."/>
            <person name="Segelke B.W."/>
            <person name="Lekin T."/>
            <person name="Heike K."/>
            <person name="Cho U.S."/>
            <person name="Naranjo C."/>
            <person name="Perry L.J."/>
            <person name="Yeates T.O."/>
            <person name="Eisenberg D."/>
        </authorList>
    </citation>
    <scope>X-RAY CRYSTALLOGRAPHY (1.95 ANGSTROMS)</scope>
</reference>
<reference evidence="6 7 8 9 10 11 12" key="4">
    <citation type="journal article" date="2004" name="J. Mol. Biol.">
        <title>Crystal structure of the Mycobacterium tuberculosis dUTPase: insights into the catalytic mechanism.</title>
        <authorList>
            <person name="Chan S."/>
            <person name="Segelke B."/>
            <person name="Lekin T."/>
            <person name="Krupka H."/>
            <person name="Cho U.S."/>
            <person name="Kim M.-Y."/>
            <person name="So M."/>
            <person name="Kim C.-Y."/>
            <person name="Naranjo C.M."/>
            <person name="Rogers Y.C."/>
            <person name="Park M.S."/>
            <person name="Waldo G.S."/>
            <person name="Pashkov I."/>
            <person name="Cascio D."/>
            <person name="Perry J.L."/>
            <person name="Sawaya M.R."/>
        </authorList>
    </citation>
    <scope>X-RAY CRYSTALLOGRAPHY (1.85 ANGSTROMS) IN COMPLEX WITH MAGNESIUM ION AND SUBSTRATE ANALOG</scope>
    <scope>COFACTOR</scope>
    <scope>SUBUNIT</scope>
</reference>